<organism>
    <name type="scientific">Prochlorococcus marinus subsp. pastoris (strain CCMP1986 / NIES-2087 / MED4)</name>
    <dbReference type="NCBI Taxonomy" id="59919"/>
    <lineage>
        <taxon>Bacteria</taxon>
        <taxon>Bacillati</taxon>
        <taxon>Cyanobacteriota</taxon>
        <taxon>Cyanophyceae</taxon>
        <taxon>Synechococcales</taxon>
        <taxon>Prochlorococcaceae</taxon>
        <taxon>Prochlorococcus</taxon>
    </lineage>
</organism>
<evidence type="ECO:0000255" key="1">
    <source>
        <dbReference type="HAMAP-Rule" id="MF_01363"/>
    </source>
</evidence>
<evidence type="ECO:0000256" key="2">
    <source>
        <dbReference type="SAM" id="MobiDB-lite"/>
    </source>
</evidence>
<evidence type="ECO:0000305" key="3"/>
<dbReference type="EMBL" id="BX548174">
    <property type="protein sequence ID" value="CAE19803.1"/>
    <property type="molecule type" value="Genomic_DNA"/>
</dbReference>
<dbReference type="RefSeq" id="WP_011132978.1">
    <property type="nucleotide sequence ID" value="NC_005072.1"/>
</dbReference>
<dbReference type="SMR" id="Q7V0C2"/>
<dbReference type="STRING" id="59919.PMM1344"/>
<dbReference type="KEGG" id="pmm:PMM1344"/>
<dbReference type="eggNOG" id="COG0261">
    <property type="taxonomic scope" value="Bacteria"/>
</dbReference>
<dbReference type="HOGENOM" id="CLU_061463_6_0_3"/>
<dbReference type="OrthoDB" id="9813334at2"/>
<dbReference type="Proteomes" id="UP000001026">
    <property type="component" value="Chromosome"/>
</dbReference>
<dbReference type="GO" id="GO:0005737">
    <property type="term" value="C:cytoplasm"/>
    <property type="evidence" value="ECO:0007669"/>
    <property type="project" value="UniProtKB-ARBA"/>
</dbReference>
<dbReference type="GO" id="GO:1990904">
    <property type="term" value="C:ribonucleoprotein complex"/>
    <property type="evidence" value="ECO:0007669"/>
    <property type="project" value="UniProtKB-KW"/>
</dbReference>
<dbReference type="GO" id="GO:0005840">
    <property type="term" value="C:ribosome"/>
    <property type="evidence" value="ECO:0007669"/>
    <property type="project" value="UniProtKB-KW"/>
</dbReference>
<dbReference type="GO" id="GO:0019843">
    <property type="term" value="F:rRNA binding"/>
    <property type="evidence" value="ECO:0007669"/>
    <property type="project" value="UniProtKB-UniRule"/>
</dbReference>
<dbReference type="GO" id="GO:0003735">
    <property type="term" value="F:structural constituent of ribosome"/>
    <property type="evidence" value="ECO:0007669"/>
    <property type="project" value="InterPro"/>
</dbReference>
<dbReference type="GO" id="GO:0006412">
    <property type="term" value="P:translation"/>
    <property type="evidence" value="ECO:0007669"/>
    <property type="project" value="UniProtKB-UniRule"/>
</dbReference>
<dbReference type="HAMAP" id="MF_01363">
    <property type="entry name" value="Ribosomal_bL21"/>
    <property type="match status" value="1"/>
</dbReference>
<dbReference type="InterPro" id="IPR028909">
    <property type="entry name" value="bL21-like"/>
</dbReference>
<dbReference type="InterPro" id="IPR036164">
    <property type="entry name" value="bL21-like_sf"/>
</dbReference>
<dbReference type="InterPro" id="IPR001787">
    <property type="entry name" value="Ribosomal_bL21"/>
</dbReference>
<dbReference type="InterPro" id="IPR018258">
    <property type="entry name" value="Ribosomal_bL21_CS"/>
</dbReference>
<dbReference type="NCBIfam" id="TIGR00061">
    <property type="entry name" value="L21"/>
    <property type="match status" value="1"/>
</dbReference>
<dbReference type="PANTHER" id="PTHR21349">
    <property type="entry name" value="50S RIBOSOMAL PROTEIN L21"/>
    <property type="match status" value="1"/>
</dbReference>
<dbReference type="PANTHER" id="PTHR21349:SF0">
    <property type="entry name" value="LARGE RIBOSOMAL SUBUNIT PROTEIN BL21M"/>
    <property type="match status" value="1"/>
</dbReference>
<dbReference type="Pfam" id="PF00829">
    <property type="entry name" value="Ribosomal_L21p"/>
    <property type="match status" value="1"/>
</dbReference>
<dbReference type="SUPFAM" id="SSF141091">
    <property type="entry name" value="L21p-like"/>
    <property type="match status" value="1"/>
</dbReference>
<dbReference type="PROSITE" id="PS01169">
    <property type="entry name" value="RIBOSOMAL_L21"/>
    <property type="match status" value="1"/>
</dbReference>
<sequence length="146" mass="16817">MTSSKKPSNSSAKNENLYAIAETSGQQFWFEVDKYYDIDRLNAKEKDKITIDKILLIKDKDNISLGQPYVKNAKIELEVVSHKRDKKIIVYKMRPKKKTRRKMGHRQELTRVMVKSISITNSTPKTSSKTEVKKKSTSPKASNPEN</sequence>
<reference key="1">
    <citation type="journal article" date="2003" name="Nature">
        <title>Genome divergence in two Prochlorococcus ecotypes reflects oceanic niche differentiation.</title>
        <authorList>
            <person name="Rocap G."/>
            <person name="Larimer F.W."/>
            <person name="Lamerdin J.E."/>
            <person name="Malfatti S."/>
            <person name="Chain P."/>
            <person name="Ahlgren N.A."/>
            <person name="Arellano A."/>
            <person name="Coleman M."/>
            <person name="Hauser L."/>
            <person name="Hess W.R."/>
            <person name="Johnson Z.I."/>
            <person name="Land M.L."/>
            <person name="Lindell D."/>
            <person name="Post A.F."/>
            <person name="Regala W."/>
            <person name="Shah M."/>
            <person name="Shaw S.L."/>
            <person name="Steglich C."/>
            <person name="Sullivan M.B."/>
            <person name="Ting C.S."/>
            <person name="Tolonen A."/>
            <person name="Webb E.A."/>
            <person name="Zinser E.R."/>
            <person name="Chisholm S.W."/>
        </authorList>
    </citation>
    <scope>NUCLEOTIDE SEQUENCE [LARGE SCALE GENOMIC DNA]</scope>
    <source>
        <strain>CCMP1986 / NIES-2087 / MED4</strain>
    </source>
</reference>
<feature type="chain" id="PRO_0000269363" description="Large ribosomal subunit protein bL21">
    <location>
        <begin position="1"/>
        <end position="146"/>
    </location>
</feature>
<feature type="region of interest" description="Disordered" evidence="2">
    <location>
        <begin position="96"/>
        <end position="146"/>
    </location>
</feature>
<keyword id="KW-0687">Ribonucleoprotein</keyword>
<keyword id="KW-0689">Ribosomal protein</keyword>
<keyword id="KW-0694">RNA-binding</keyword>
<keyword id="KW-0699">rRNA-binding</keyword>
<proteinExistence type="inferred from homology"/>
<gene>
    <name evidence="1" type="primary">rplU</name>
    <name evidence="1" type="synonym">rpl21</name>
    <name type="ordered locus">PMM1344</name>
</gene>
<name>RL21_PROMP</name>
<accession>Q7V0C2</accession>
<protein>
    <recommendedName>
        <fullName evidence="1">Large ribosomal subunit protein bL21</fullName>
    </recommendedName>
    <alternativeName>
        <fullName evidence="3">50S ribosomal protein L21</fullName>
    </alternativeName>
</protein>
<comment type="function">
    <text evidence="1">This protein binds to 23S rRNA in the presence of protein L20.</text>
</comment>
<comment type="subunit">
    <text evidence="1">Part of the 50S ribosomal subunit. Contacts protein L20.</text>
</comment>
<comment type="similarity">
    <text evidence="1">Belongs to the bacterial ribosomal protein bL21 family.</text>
</comment>